<evidence type="ECO:0000255" key="1"/>
<evidence type="ECO:0000255" key="2">
    <source>
        <dbReference type="PROSITE-ProRule" id="PRU00159"/>
    </source>
</evidence>
<evidence type="ECO:0000255" key="3">
    <source>
        <dbReference type="PROSITE-ProRule" id="PRU00211"/>
    </source>
</evidence>
<evidence type="ECO:0000269" key="4">
    <source>
    </source>
</evidence>
<evidence type="ECO:0000269" key="5">
    <source>
    </source>
</evidence>
<evidence type="ECO:0000303" key="6">
    <source>
    </source>
</evidence>
<evidence type="ECO:0000303" key="7">
    <source ref="2"/>
</evidence>
<evidence type="ECO:0000305" key="8"/>
<name>STK31_HUMAN</name>
<comment type="catalytic activity">
    <reaction>
        <text>L-seryl-[protein] + ATP = O-phospho-L-seryl-[protein] + ADP + H(+)</text>
        <dbReference type="Rhea" id="RHEA:17989"/>
        <dbReference type="Rhea" id="RHEA-COMP:9863"/>
        <dbReference type="Rhea" id="RHEA-COMP:11604"/>
        <dbReference type="ChEBI" id="CHEBI:15378"/>
        <dbReference type="ChEBI" id="CHEBI:29999"/>
        <dbReference type="ChEBI" id="CHEBI:30616"/>
        <dbReference type="ChEBI" id="CHEBI:83421"/>
        <dbReference type="ChEBI" id="CHEBI:456216"/>
        <dbReference type="EC" id="2.7.11.1"/>
    </reaction>
</comment>
<comment type="catalytic activity">
    <reaction>
        <text>L-threonyl-[protein] + ATP = O-phospho-L-threonyl-[protein] + ADP + H(+)</text>
        <dbReference type="Rhea" id="RHEA:46608"/>
        <dbReference type="Rhea" id="RHEA-COMP:11060"/>
        <dbReference type="Rhea" id="RHEA-COMP:11605"/>
        <dbReference type="ChEBI" id="CHEBI:15378"/>
        <dbReference type="ChEBI" id="CHEBI:30013"/>
        <dbReference type="ChEBI" id="CHEBI:30616"/>
        <dbReference type="ChEBI" id="CHEBI:61977"/>
        <dbReference type="ChEBI" id="CHEBI:456216"/>
        <dbReference type="EC" id="2.7.11.1"/>
    </reaction>
</comment>
<comment type="alternative products">
    <event type="alternative splicing"/>
    <isoform>
        <id>Q9BXU1-1</id>
        <name>1</name>
        <sequence type="displayed"/>
    </isoform>
    <isoform>
        <id>Q9BXU1-2</id>
        <name>2</name>
        <sequence type="described" ref="VSP_024389"/>
    </isoform>
    <isoform>
        <id>Q9BXU1-3</id>
        <name>3</name>
        <sequence type="described" ref="VSP_045210"/>
    </isoform>
</comment>
<comment type="tissue specificity">
    <text>Testis specific.</text>
</comment>
<comment type="similarity">
    <text evidence="2">Belongs to the protein kinase superfamily. Ser/Thr protein kinase family.</text>
</comment>
<comment type="caution">
    <text evidence="8">Ser-854 is present instead of the conserved Asp which is expected to be an active site residue.</text>
</comment>
<reference key="1">
    <citation type="journal article" date="2001" name="Nat. Genet.">
        <title>An abundance of X-linked genes expressed in spermatogonia.</title>
        <authorList>
            <person name="Wang P.J."/>
            <person name="McCarrey J.R."/>
            <person name="Yang F."/>
            <person name="Page D.C."/>
        </authorList>
    </citation>
    <scope>NUCLEOTIDE SEQUENCE [MRNA] (ISOFORM 1)</scope>
    <source>
        <tissue>Testis</tissue>
    </source>
</reference>
<reference key="2">
    <citation type="submission" date="2001-03" db="EMBL/GenBank/DDBJ databases">
        <title>Cloning of a new protein kinase gene related to human testis development.</title>
        <authorList>
            <person name="Zhou Z.M."/>
        </authorList>
    </citation>
    <scope>NUCLEOTIDE SEQUENCE [MRNA] (ISOFORM 2)</scope>
    <source>
        <tissue>Testis</tissue>
    </source>
</reference>
<reference key="3">
    <citation type="journal article" date="2004" name="Nat. Genet.">
        <title>Complete sequencing and characterization of 21,243 full-length human cDNAs.</title>
        <authorList>
            <person name="Ota T."/>
            <person name="Suzuki Y."/>
            <person name="Nishikawa T."/>
            <person name="Otsuki T."/>
            <person name="Sugiyama T."/>
            <person name="Irie R."/>
            <person name="Wakamatsu A."/>
            <person name="Hayashi K."/>
            <person name="Sato H."/>
            <person name="Nagai K."/>
            <person name="Kimura K."/>
            <person name="Makita H."/>
            <person name="Sekine M."/>
            <person name="Obayashi M."/>
            <person name="Nishi T."/>
            <person name="Shibahara T."/>
            <person name="Tanaka T."/>
            <person name="Ishii S."/>
            <person name="Yamamoto J."/>
            <person name="Saito K."/>
            <person name="Kawai Y."/>
            <person name="Isono Y."/>
            <person name="Nakamura Y."/>
            <person name="Nagahari K."/>
            <person name="Murakami K."/>
            <person name="Yasuda T."/>
            <person name="Iwayanagi T."/>
            <person name="Wagatsuma M."/>
            <person name="Shiratori A."/>
            <person name="Sudo H."/>
            <person name="Hosoiri T."/>
            <person name="Kaku Y."/>
            <person name="Kodaira H."/>
            <person name="Kondo H."/>
            <person name="Sugawara M."/>
            <person name="Takahashi M."/>
            <person name="Kanda K."/>
            <person name="Yokoi T."/>
            <person name="Furuya T."/>
            <person name="Kikkawa E."/>
            <person name="Omura Y."/>
            <person name="Abe K."/>
            <person name="Kamihara K."/>
            <person name="Katsuta N."/>
            <person name="Sato K."/>
            <person name="Tanikawa M."/>
            <person name="Yamazaki M."/>
            <person name="Ninomiya K."/>
            <person name="Ishibashi T."/>
            <person name="Yamashita H."/>
            <person name="Murakawa K."/>
            <person name="Fujimori K."/>
            <person name="Tanai H."/>
            <person name="Kimata M."/>
            <person name="Watanabe M."/>
            <person name="Hiraoka S."/>
            <person name="Chiba Y."/>
            <person name="Ishida S."/>
            <person name="Ono Y."/>
            <person name="Takiguchi S."/>
            <person name="Watanabe S."/>
            <person name="Yosida M."/>
            <person name="Hotuta T."/>
            <person name="Kusano J."/>
            <person name="Kanehori K."/>
            <person name="Takahashi-Fujii A."/>
            <person name="Hara H."/>
            <person name="Tanase T.-O."/>
            <person name="Nomura Y."/>
            <person name="Togiya S."/>
            <person name="Komai F."/>
            <person name="Hara R."/>
            <person name="Takeuchi K."/>
            <person name="Arita M."/>
            <person name="Imose N."/>
            <person name="Musashino K."/>
            <person name="Yuuki H."/>
            <person name="Oshima A."/>
            <person name="Sasaki N."/>
            <person name="Aotsuka S."/>
            <person name="Yoshikawa Y."/>
            <person name="Matsunawa H."/>
            <person name="Ichihara T."/>
            <person name="Shiohata N."/>
            <person name="Sano S."/>
            <person name="Moriya S."/>
            <person name="Momiyama H."/>
            <person name="Satoh N."/>
            <person name="Takami S."/>
            <person name="Terashima Y."/>
            <person name="Suzuki O."/>
            <person name="Nakagawa S."/>
            <person name="Senoh A."/>
            <person name="Mizoguchi H."/>
            <person name="Goto Y."/>
            <person name="Shimizu F."/>
            <person name="Wakebe H."/>
            <person name="Hishigaki H."/>
            <person name="Watanabe T."/>
            <person name="Sugiyama A."/>
            <person name="Takemoto M."/>
            <person name="Kawakami B."/>
            <person name="Yamazaki M."/>
            <person name="Watanabe K."/>
            <person name="Kumagai A."/>
            <person name="Itakura S."/>
            <person name="Fukuzumi Y."/>
            <person name="Fujimori Y."/>
            <person name="Komiyama M."/>
            <person name="Tashiro H."/>
            <person name="Tanigami A."/>
            <person name="Fujiwara T."/>
            <person name="Ono T."/>
            <person name="Yamada K."/>
            <person name="Fujii Y."/>
            <person name="Ozaki K."/>
            <person name="Hirao M."/>
            <person name="Ohmori Y."/>
            <person name="Kawabata A."/>
            <person name="Hikiji T."/>
            <person name="Kobatake N."/>
            <person name="Inagaki H."/>
            <person name="Ikema Y."/>
            <person name="Okamoto S."/>
            <person name="Okitani R."/>
            <person name="Kawakami T."/>
            <person name="Noguchi S."/>
            <person name="Itoh T."/>
            <person name="Shigeta K."/>
            <person name="Senba T."/>
            <person name="Matsumura K."/>
            <person name="Nakajima Y."/>
            <person name="Mizuno T."/>
            <person name="Morinaga M."/>
            <person name="Sasaki M."/>
            <person name="Togashi T."/>
            <person name="Oyama M."/>
            <person name="Hata H."/>
            <person name="Watanabe M."/>
            <person name="Komatsu T."/>
            <person name="Mizushima-Sugano J."/>
            <person name="Satoh T."/>
            <person name="Shirai Y."/>
            <person name="Takahashi Y."/>
            <person name="Nakagawa K."/>
            <person name="Okumura K."/>
            <person name="Nagase T."/>
            <person name="Nomura N."/>
            <person name="Kikuchi H."/>
            <person name="Masuho Y."/>
            <person name="Yamashita R."/>
            <person name="Nakai K."/>
            <person name="Yada T."/>
            <person name="Nakamura Y."/>
            <person name="Ohara O."/>
            <person name="Isogai T."/>
            <person name="Sugano S."/>
        </authorList>
    </citation>
    <scope>NUCLEOTIDE SEQUENCE [LARGE SCALE MRNA] (ISOFORM 3)</scope>
    <source>
        <tissue>Testis</tissue>
    </source>
</reference>
<reference key="4">
    <citation type="journal article" date="2003" name="Nature">
        <title>The DNA sequence of human chromosome 7.</title>
        <authorList>
            <person name="Hillier L.W."/>
            <person name="Fulton R.S."/>
            <person name="Fulton L.A."/>
            <person name="Graves T.A."/>
            <person name="Pepin K.H."/>
            <person name="Wagner-McPherson C."/>
            <person name="Layman D."/>
            <person name="Maas J."/>
            <person name="Jaeger S."/>
            <person name="Walker R."/>
            <person name="Wylie K."/>
            <person name="Sekhon M."/>
            <person name="Becker M.C."/>
            <person name="O'Laughlin M.D."/>
            <person name="Schaller M.E."/>
            <person name="Fewell G.A."/>
            <person name="Delehaunty K.D."/>
            <person name="Miner T.L."/>
            <person name="Nash W.E."/>
            <person name="Cordes M."/>
            <person name="Du H."/>
            <person name="Sun H."/>
            <person name="Edwards J."/>
            <person name="Bradshaw-Cordum H."/>
            <person name="Ali J."/>
            <person name="Andrews S."/>
            <person name="Isak A."/>
            <person name="Vanbrunt A."/>
            <person name="Nguyen C."/>
            <person name="Du F."/>
            <person name="Lamar B."/>
            <person name="Courtney L."/>
            <person name="Kalicki J."/>
            <person name="Ozersky P."/>
            <person name="Bielicki L."/>
            <person name="Scott K."/>
            <person name="Holmes A."/>
            <person name="Harkins R."/>
            <person name="Harris A."/>
            <person name="Strong C.M."/>
            <person name="Hou S."/>
            <person name="Tomlinson C."/>
            <person name="Dauphin-Kohlberg S."/>
            <person name="Kozlowicz-Reilly A."/>
            <person name="Leonard S."/>
            <person name="Rohlfing T."/>
            <person name="Rock S.M."/>
            <person name="Tin-Wollam A.-M."/>
            <person name="Abbott A."/>
            <person name="Minx P."/>
            <person name="Maupin R."/>
            <person name="Strowmatt C."/>
            <person name="Latreille P."/>
            <person name="Miller N."/>
            <person name="Johnson D."/>
            <person name="Murray J."/>
            <person name="Woessner J.P."/>
            <person name="Wendl M.C."/>
            <person name="Yang S.-P."/>
            <person name="Schultz B.R."/>
            <person name="Wallis J.W."/>
            <person name="Spieth J."/>
            <person name="Bieri T.A."/>
            <person name="Nelson J.O."/>
            <person name="Berkowicz N."/>
            <person name="Wohldmann P.E."/>
            <person name="Cook L.L."/>
            <person name="Hickenbotham M.T."/>
            <person name="Eldred J."/>
            <person name="Williams D."/>
            <person name="Bedell J.A."/>
            <person name="Mardis E.R."/>
            <person name="Clifton S.W."/>
            <person name="Chissoe S.L."/>
            <person name="Marra M.A."/>
            <person name="Raymond C."/>
            <person name="Haugen E."/>
            <person name="Gillett W."/>
            <person name="Zhou Y."/>
            <person name="James R."/>
            <person name="Phelps K."/>
            <person name="Iadanoto S."/>
            <person name="Bubb K."/>
            <person name="Simms E."/>
            <person name="Levy R."/>
            <person name="Clendenning J."/>
            <person name="Kaul R."/>
            <person name="Kent W.J."/>
            <person name="Furey T.S."/>
            <person name="Baertsch R.A."/>
            <person name="Brent M.R."/>
            <person name="Keibler E."/>
            <person name="Flicek P."/>
            <person name="Bork P."/>
            <person name="Suyama M."/>
            <person name="Bailey J.A."/>
            <person name="Portnoy M.E."/>
            <person name="Torrents D."/>
            <person name="Chinwalla A.T."/>
            <person name="Gish W.R."/>
            <person name="Eddy S.R."/>
            <person name="McPherson J.D."/>
            <person name="Olson M.V."/>
            <person name="Eichler E.E."/>
            <person name="Green E.D."/>
            <person name="Waterston R.H."/>
            <person name="Wilson R.K."/>
        </authorList>
    </citation>
    <scope>NUCLEOTIDE SEQUENCE [LARGE SCALE GENOMIC DNA]</scope>
</reference>
<reference key="5">
    <citation type="journal article" date="2004" name="Genome Res.">
        <title>The status, quality, and expansion of the NIH full-length cDNA project: the Mammalian Gene Collection (MGC).</title>
        <authorList>
            <consortium name="The MGC Project Team"/>
        </authorList>
    </citation>
    <scope>NUCLEOTIDE SEQUENCE [LARGE SCALE MRNA] (ISOFORM 1)</scope>
    <scope>VARIANT HIS-71</scope>
    <source>
        <tissue>Testis</tissue>
    </source>
</reference>
<reference key="6">
    <citation type="journal article" date="2007" name="Nature">
        <title>Patterns of somatic mutation in human cancer genomes.</title>
        <authorList>
            <person name="Greenman C."/>
            <person name="Stephens P."/>
            <person name="Smith R."/>
            <person name="Dalgliesh G.L."/>
            <person name="Hunter C."/>
            <person name="Bignell G."/>
            <person name="Davies H."/>
            <person name="Teague J."/>
            <person name="Butler A."/>
            <person name="Stevens C."/>
            <person name="Edkins S."/>
            <person name="O'Meara S."/>
            <person name="Vastrik I."/>
            <person name="Schmidt E.E."/>
            <person name="Avis T."/>
            <person name="Barthorpe S."/>
            <person name="Bhamra G."/>
            <person name="Buck G."/>
            <person name="Choudhury B."/>
            <person name="Clements J."/>
            <person name="Cole J."/>
            <person name="Dicks E."/>
            <person name="Forbes S."/>
            <person name="Gray K."/>
            <person name="Halliday K."/>
            <person name="Harrison R."/>
            <person name="Hills K."/>
            <person name="Hinton J."/>
            <person name="Jenkinson A."/>
            <person name="Jones D."/>
            <person name="Menzies A."/>
            <person name="Mironenko T."/>
            <person name="Perry J."/>
            <person name="Raine K."/>
            <person name="Richardson D."/>
            <person name="Shepherd R."/>
            <person name="Small A."/>
            <person name="Tofts C."/>
            <person name="Varian J."/>
            <person name="Webb T."/>
            <person name="West S."/>
            <person name="Widaa S."/>
            <person name="Yates A."/>
            <person name="Cahill D.P."/>
            <person name="Louis D.N."/>
            <person name="Goldstraw P."/>
            <person name="Nicholson A.G."/>
            <person name="Brasseur F."/>
            <person name="Looijenga L."/>
            <person name="Weber B.L."/>
            <person name="Chiew Y.-E."/>
            <person name="DeFazio A."/>
            <person name="Greaves M.F."/>
            <person name="Green A.R."/>
            <person name="Campbell P."/>
            <person name="Birney E."/>
            <person name="Easton D.F."/>
            <person name="Chenevix-Trench G."/>
            <person name="Tan M.-H."/>
            <person name="Khoo S.K."/>
            <person name="Teh B.T."/>
            <person name="Yuen S.T."/>
            <person name="Leung S.Y."/>
            <person name="Wooster R."/>
            <person name="Futreal P.A."/>
            <person name="Stratton M.R."/>
        </authorList>
    </citation>
    <scope>VARIANTS [LARGE SCALE ANALYSIS] HIS-71; PHE-125; LYS-261; ASN-268; LYS-277; THR-393; GLU-410; PRO-489; THR-600; LYS-621; ILE-623; ARG-684; TYR-684; LYS-709; LEU-860; MET-1000 AND SER-1010</scope>
</reference>
<feature type="chain" id="PRO_0000086715" description="Serine/threonine-protein kinase 31">
    <location>
        <begin position="1"/>
        <end position="1019"/>
    </location>
</feature>
<feature type="domain" description="Tudor" evidence="3">
    <location>
        <begin position="78"/>
        <end position="137"/>
    </location>
</feature>
<feature type="domain" description="Protein kinase" evidence="2">
    <location>
        <begin position="710"/>
        <end position="1019"/>
    </location>
</feature>
<feature type="coiled-coil region" evidence="1">
    <location>
        <begin position="298"/>
        <end position="355"/>
    </location>
</feature>
<feature type="binding site" evidence="2">
    <location>
        <begin position="716"/>
        <end position="724"/>
    </location>
    <ligand>
        <name>ATP</name>
        <dbReference type="ChEBI" id="CHEBI:30616"/>
    </ligand>
</feature>
<feature type="binding site" evidence="2">
    <location>
        <position position="737"/>
    </location>
    <ligand>
        <name>ATP</name>
        <dbReference type="ChEBI" id="CHEBI:30616"/>
    </ligand>
</feature>
<feature type="splice variant" id="VSP_024389" description="In isoform 2." evidence="7">
    <location>
        <begin position="1"/>
        <end position="23"/>
    </location>
</feature>
<feature type="splice variant" id="VSP_045210" description="In isoform 3." evidence="6">
    <location>
        <begin position="921"/>
        <end position="943"/>
    </location>
</feature>
<feature type="sequence variant" id="VAR_031600" description="In dbSNP:rs6945306." evidence="4 5">
    <original>Q</original>
    <variation>H</variation>
    <location>
        <position position="71"/>
    </location>
</feature>
<feature type="sequence variant" id="VAR_041150" description="In dbSNP:rs56268851." evidence="5">
    <original>S</original>
    <variation>F</variation>
    <location>
        <position position="125"/>
    </location>
</feature>
<feature type="sequence variant" id="VAR_031601" description="In dbSNP:rs10264952." evidence="5">
    <original>E</original>
    <variation>K</variation>
    <location>
        <position position="261"/>
    </location>
</feature>
<feature type="sequence variant" id="VAR_031602" description="In dbSNP:rs10264967." evidence="5">
    <original>K</original>
    <variation>N</variation>
    <location>
        <position position="268"/>
    </location>
</feature>
<feature type="sequence variant" id="VAR_041151" description="In dbSNP:rs55950645." evidence="5">
    <original>I</original>
    <variation>K</variation>
    <location>
        <position position="277"/>
    </location>
</feature>
<feature type="sequence variant" id="VAR_031603" description="In dbSNP:rs35545265.">
    <original>T</original>
    <variation>P</variation>
    <location>
        <position position="362"/>
    </location>
</feature>
<feature type="sequence variant" id="VAR_051675" description="In dbSNP:rs35995607.">
    <original>R</original>
    <variation>C</variation>
    <location>
        <position position="385"/>
    </location>
</feature>
<feature type="sequence variant" id="VAR_041152" description="In dbSNP:rs56244148." evidence="5">
    <original>A</original>
    <variation>T</variation>
    <location>
        <position position="393"/>
    </location>
</feature>
<feature type="sequence variant" id="VAR_031604" description="In dbSNP:rs4722266." evidence="5">
    <original>G</original>
    <variation>E</variation>
    <location>
        <position position="410"/>
    </location>
</feature>
<feature type="sequence variant" id="VAR_041153" description="In dbSNP:rs34414354." evidence="5">
    <original>A</original>
    <variation>P</variation>
    <location>
        <position position="489"/>
    </location>
</feature>
<feature type="sequence variant" id="VAR_041154" description="In dbSNP:rs55796076." evidence="5">
    <original>A</original>
    <variation>T</variation>
    <location>
        <position position="600"/>
    </location>
</feature>
<feature type="sequence variant" id="VAR_041155" description="In dbSNP:rs10263079." evidence="5">
    <original>N</original>
    <variation>K</variation>
    <location>
        <position position="621"/>
    </location>
</feature>
<feature type="sequence variant" id="VAR_041156" description="In dbSNP:rs10247878." evidence="5">
    <original>S</original>
    <variation>I</variation>
    <location>
        <position position="623"/>
    </location>
</feature>
<feature type="sequence variant" id="VAR_041157" description="In dbSNP:rs41273999." evidence="5">
    <original>H</original>
    <variation>R</variation>
    <location>
        <position position="684"/>
    </location>
</feature>
<feature type="sequence variant" id="VAR_041158" description="In a lung neuroendocrine carcinoma sample; somatic mutation." evidence="5">
    <original>H</original>
    <variation>Y</variation>
    <location>
        <position position="684"/>
    </location>
</feature>
<feature type="sequence variant" id="VAR_041159" description="In dbSNP:rs56181834." evidence="5">
    <original>E</original>
    <variation>K</variation>
    <location>
        <position position="709"/>
    </location>
</feature>
<feature type="sequence variant" id="VAR_041160" description="In a lung small cell carcinoma sample; somatic mutation." evidence="5">
    <original>V</original>
    <variation>L</variation>
    <location>
        <position position="860"/>
    </location>
</feature>
<feature type="sequence variant" id="VAR_041161" description="In dbSNP:rs55794023." evidence="5">
    <original>T</original>
    <variation>M</variation>
    <location>
        <position position="1000"/>
    </location>
</feature>
<feature type="sequence variant" id="VAR_031605" description="In dbSNP:rs33998018.">
    <original>K</original>
    <variation>T</variation>
    <location>
        <position position="1009"/>
    </location>
</feature>
<feature type="sequence variant" id="VAR_041162" description="In dbSNP:rs56391043." evidence="5">
    <original>T</original>
    <variation>S</variation>
    <location>
        <position position="1010"/>
    </location>
</feature>
<feature type="sequence conflict" description="In Ref. 2; AAK17193." evidence="8" ref="2">
    <original>I</original>
    <variation>F</variation>
    <location>
        <position position="300"/>
    </location>
</feature>
<feature type="sequence conflict" description="In Ref. 2; AAK17193." evidence="8" ref="2">
    <original>F</original>
    <variation>Y</variation>
    <location>
        <position position="509"/>
    </location>
</feature>
<feature type="sequence conflict" description="In Ref. 1; AAK31978." evidence="8" ref="1">
    <original>NKS</original>
    <variation>KKI</variation>
    <location>
        <begin position="621"/>
        <end position="623"/>
    </location>
</feature>
<feature type="sequence conflict" description="In Ref. 2; AAK17193." evidence="8" ref="2">
    <original>Y</original>
    <variation>C</variation>
    <location>
        <position position="715"/>
    </location>
</feature>
<feature type="sequence conflict" description="In Ref. 2; AAK17193." evidence="8" ref="2">
    <original>V</original>
    <variation>A</variation>
    <location>
        <position position="820"/>
    </location>
</feature>
<feature type="sequence conflict" description="In Ref. 2; AAK17193." evidence="8" ref="2">
    <original>K</original>
    <variation>I</variation>
    <location>
        <position position="948"/>
    </location>
</feature>
<feature type="sequence conflict" description="In Ref. 2; AAK17193." evidence="8" ref="2">
    <original>A</original>
    <variation>G</variation>
    <location>
        <position position="963"/>
    </location>
</feature>
<feature type="sequence conflict" description="In Ref. 2; AAK17193." evidence="8" ref="2">
    <original>T</original>
    <variation>P</variation>
    <location>
        <position position="1000"/>
    </location>
</feature>
<feature type="sequence conflict" description="In Ref. 1; AAK31978." evidence="8" ref="1">
    <original>T</original>
    <variation>P</variation>
    <location>
        <position position="1010"/>
    </location>
</feature>
<organism>
    <name type="scientific">Homo sapiens</name>
    <name type="common">Human</name>
    <dbReference type="NCBI Taxonomy" id="9606"/>
    <lineage>
        <taxon>Eukaryota</taxon>
        <taxon>Metazoa</taxon>
        <taxon>Chordata</taxon>
        <taxon>Craniata</taxon>
        <taxon>Vertebrata</taxon>
        <taxon>Euteleostomi</taxon>
        <taxon>Mammalia</taxon>
        <taxon>Eutheria</taxon>
        <taxon>Euarchontoglires</taxon>
        <taxon>Primates</taxon>
        <taxon>Haplorrhini</taxon>
        <taxon>Catarrhini</taxon>
        <taxon>Hominidae</taxon>
        <taxon>Homo</taxon>
    </lineage>
</organism>
<accession>Q9BXU1</accession>
<accession>B4DZ06</accession>
<accession>B7WPP5</accession>
<accession>C9J4F9</accession>
<accession>Q6PCD3</accession>
<accession>Q9BXH8</accession>
<dbReference type="EC" id="2.7.11.1"/>
<dbReference type="EMBL" id="AF285599">
    <property type="protein sequence ID" value="AAK31978.1"/>
    <property type="molecule type" value="mRNA"/>
</dbReference>
<dbReference type="EMBL" id="AF332194">
    <property type="protein sequence ID" value="AAK17193.1"/>
    <property type="molecule type" value="mRNA"/>
</dbReference>
<dbReference type="EMBL" id="AK302689">
    <property type="protein sequence ID" value="BAG63918.1"/>
    <property type="molecule type" value="mRNA"/>
</dbReference>
<dbReference type="EMBL" id="AC003087">
    <property type="status" value="NOT_ANNOTATED_CDS"/>
    <property type="molecule type" value="Genomic_DNA"/>
</dbReference>
<dbReference type="EMBL" id="AC008176">
    <property type="status" value="NOT_ANNOTATED_CDS"/>
    <property type="molecule type" value="Genomic_DNA"/>
</dbReference>
<dbReference type="EMBL" id="BC059374">
    <property type="protein sequence ID" value="AAH59374.1"/>
    <property type="molecule type" value="mRNA"/>
</dbReference>
<dbReference type="CCDS" id="CCDS43556.1">
    <molecule id="Q9BXU1-2"/>
</dbReference>
<dbReference type="CCDS" id="CCDS5386.1">
    <molecule id="Q9BXU1-1"/>
</dbReference>
<dbReference type="CCDS" id="CCDS59049.1">
    <molecule id="Q9BXU1-3"/>
</dbReference>
<dbReference type="RefSeq" id="NP_001247433.1">
    <molecule id="Q9BXU1-2"/>
    <property type="nucleotide sequence ID" value="NM_001260504.2"/>
</dbReference>
<dbReference type="RefSeq" id="NP_001247434.1">
    <molecule id="Q9BXU1-3"/>
    <property type="nucleotide sequence ID" value="NM_001260505.2"/>
</dbReference>
<dbReference type="RefSeq" id="NP_113602.2">
    <molecule id="Q9BXU1-1"/>
    <property type="nucleotide sequence ID" value="NM_031414.4"/>
</dbReference>
<dbReference type="RefSeq" id="NP_116562.2">
    <molecule id="Q9BXU1-2"/>
    <property type="nucleotide sequence ID" value="NM_032944.4"/>
</dbReference>
<dbReference type="RefSeq" id="XP_011513752.1">
    <molecule id="Q9BXU1-2"/>
    <property type="nucleotide sequence ID" value="XM_011515450.2"/>
</dbReference>
<dbReference type="RefSeq" id="XP_054214628.1">
    <molecule id="Q9BXU1-2"/>
    <property type="nucleotide sequence ID" value="XM_054358653.1"/>
</dbReference>
<dbReference type="BioGRID" id="121097">
    <property type="interactions" value="14"/>
</dbReference>
<dbReference type="FunCoup" id="Q9BXU1">
    <property type="interactions" value="82"/>
</dbReference>
<dbReference type="IntAct" id="Q9BXU1">
    <property type="interactions" value="7"/>
</dbReference>
<dbReference type="MINT" id="Q9BXU1"/>
<dbReference type="STRING" id="9606.ENSP00000348132"/>
<dbReference type="BindingDB" id="Q9BXU1"/>
<dbReference type="ChEMBL" id="CHEMBL6151"/>
<dbReference type="GuidetoPHARMACOLOGY" id="2220"/>
<dbReference type="GlyGen" id="Q9BXU1">
    <property type="glycosylation" value="2 sites, 1 O-linked glycan (2 sites)"/>
</dbReference>
<dbReference type="iPTMnet" id="Q9BXU1"/>
<dbReference type="PhosphoSitePlus" id="Q9BXU1"/>
<dbReference type="BioMuta" id="STK31"/>
<dbReference type="DMDM" id="143811463"/>
<dbReference type="jPOST" id="Q9BXU1"/>
<dbReference type="MassIVE" id="Q9BXU1"/>
<dbReference type="PaxDb" id="9606-ENSP00000348132"/>
<dbReference type="PeptideAtlas" id="Q9BXU1"/>
<dbReference type="ProteomicsDB" id="5561"/>
<dbReference type="ProteomicsDB" id="79517">
    <molecule id="Q9BXU1-1"/>
</dbReference>
<dbReference type="ProteomicsDB" id="79518">
    <molecule id="Q9BXU1-2"/>
</dbReference>
<dbReference type="Antibodypedia" id="12132">
    <property type="antibodies" value="240 antibodies from 29 providers"/>
</dbReference>
<dbReference type="DNASU" id="56164"/>
<dbReference type="Ensembl" id="ENST00000354639.7">
    <molecule id="Q9BXU1-2"/>
    <property type="protein sequence ID" value="ENSP00000346660.3"/>
    <property type="gene ID" value="ENSG00000196335.13"/>
</dbReference>
<dbReference type="Ensembl" id="ENST00000355870.8">
    <molecule id="Q9BXU1-1"/>
    <property type="protein sequence ID" value="ENSP00000348132.3"/>
    <property type="gene ID" value="ENSG00000196335.13"/>
</dbReference>
<dbReference type="Ensembl" id="ENST00000433467.6">
    <molecule id="Q9BXU1-3"/>
    <property type="protein sequence ID" value="ENSP00000411852.2"/>
    <property type="gene ID" value="ENSG00000196335.13"/>
</dbReference>
<dbReference type="GeneID" id="56164"/>
<dbReference type="KEGG" id="hsa:56164"/>
<dbReference type="MANE-Select" id="ENST00000355870.8">
    <property type="protein sequence ID" value="ENSP00000348132.3"/>
    <property type="RefSeq nucleotide sequence ID" value="NM_031414.5"/>
    <property type="RefSeq protein sequence ID" value="NP_113602.2"/>
</dbReference>
<dbReference type="UCSC" id="uc003sws.6">
    <molecule id="Q9BXU1-1"/>
    <property type="organism name" value="human"/>
</dbReference>
<dbReference type="AGR" id="HGNC:11407"/>
<dbReference type="CTD" id="56164"/>
<dbReference type="DisGeNET" id="56164"/>
<dbReference type="GeneCards" id="STK31"/>
<dbReference type="HGNC" id="HGNC:11407">
    <property type="gene designation" value="STK31"/>
</dbReference>
<dbReference type="HPA" id="ENSG00000196335">
    <property type="expression patterns" value="Tissue enriched (testis)"/>
</dbReference>
<dbReference type="MIM" id="605790">
    <property type="type" value="gene"/>
</dbReference>
<dbReference type="neXtProt" id="NX_Q9BXU1"/>
<dbReference type="OpenTargets" id="ENSG00000196335"/>
<dbReference type="PharmGKB" id="PA36214"/>
<dbReference type="VEuPathDB" id="HostDB:ENSG00000196335"/>
<dbReference type="eggNOG" id="ENOG502QPJA">
    <property type="taxonomic scope" value="Eukaryota"/>
</dbReference>
<dbReference type="GeneTree" id="ENSGT00390000007287"/>
<dbReference type="HOGENOM" id="CLU_011956_0_0_1"/>
<dbReference type="InParanoid" id="Q9BXU1"/>
<dbReference type="OMA" id="HRAWNQQ"/>
<dbReference type="OrthoDB" id="10023235at2759"/>
<dbReference type="PAN-GO" id="Q9BXU1">
    <property type="GO annotations" value="1 GO annotation based on evolutionary models"/>
</dbReference>
<dbReference type="PhylomeDB" id="Q9BXU1"/>
<dbReference type="TreeFam" id="TF105335"/>
<dbReference type="BRENDA" id="2.7.11.1">
    <property type="organism ID" value="2681"/>
</dbReference>
<dbReference type="PathwayCommons" id="Q9BXU1"/>
<dbReference type="SignaLink" id="Q9BXU1"/>
<dbReference type="BioGRID-ORCS" id="56164">
    <property type="hits" value="14 hits in 1182 CRISPR screens"/>
</dbReference>
<dbReference type="GenomeRNAi" id="56164"/>
<dbReference type="Pharos" id="Q9BXU1">
    <property type="development level" value="Tchem"/>
</dbReference>
<dbReference type="PRO" id="PR:Q9BXU1"/>
<dbReference type="Proteomes" id="UP000005640">
    <property type="component" value="Chromosome 7"/>
</dbReference>
<dbReference type="RNAct" id="Q9BXU1">
    <property type="molecule type" value="protein"/>
</dbReference>
<dbReference type="Bgee" id="ENSG00000196335">
    <property type="expression patterns" value="Expressed in male germ line stem cell (sensu Vertebrata) in testis and 104 other cell types or tissues"/>
</dbReference>
<dbReference type="ExpressionAtlas" id="Q9BXU1">
    <property type="expression patterns" value="baseline and differential"/>
</dbReference>
<dbReference type="GO" id="GO:0001669">
    <property type="term" value="C:acrosomal vesicle"/>
    <property type="evidence" value="ECO:0007669"/>
    <property type="project" value="Ensembl"/>
</dbReference>
<dbReference type="GO" id="GO:0005524">
    <property type="term" value="F:ATP binding"/>
    <property type="evidence" value="ECO:0007669"/>
    <property type="project" value="UniProtKB-KW"/>
</dbReference>
<dbReference type="GO" id="GO:0106310">
    <property type="term" value="F:protein serine kinase activity"/>
    <property type="evidence" value="ECO:0007669"/>
    <property type="project" value="RHEA"/>
</dbReference>
<dbReference type="GO" id="GO:0004674">
    <property type="term" value="F:protein serine/threonine kinase activity"/>
    <property type="evidence" value="ECO:0007669"/>
    <property type="project" value="UniProtKB-KW"/>
</dbReference>
<dbReference type="CDD" id="cd20430">
    <property type="entry name" value="Tudor_TDRD8"/>
    <property type="match status" value="1"/>
</dbReference>
<dbReference type="FunFam" id="1.10.510.10:FF:000808">
    <property type="entry name" value="Serine/threonine kinase 31"/>
    <property type="match status" value="1"/>
</dbReference>
<dbReference type="FunFam" id="2.30.30.140:FF:000018">
    <property type="entry name" value="Serine/threonine-protein kinase 31"/>
    <property type="match status" value="1"/>
</dbReference>
<dbReference type="Gene3D" id="2.30.30.140">
    <property type="match status" value="1"/>
</dbReference>
<dbReference type="Gene3D" id="2.40.50.90">
    <property type="match status" value="1"/>
</dbReference>
<dbReference type="Gene3D" id="1.10.510.10">
    <property type="entry name" value="Transferase(Phosphotransferase) domain 1"/>
    <property type="match status" value="1"/>
</dbReference>
<dbReference type="InterPro" id="IPR011009">
    <property type="entry name" value="Kinase-like_dom_sf"/>
</dbReference>
<dbReference type="InterPro" id="IPR000719">
    <property type="entry name" value="Prot_kinase_dom"/>
</dbReference>
<dbReference type="InterPro" id="IPR052451">
    <property type="entry name" value="Ser/Thr_kinase-like"/>
</dbReference>
<dbReference type="InterPro" id="IPR035437">
    <property type="entry name" value="SNase_OB-fold_sf"/>
</dbReference>
<dbReference type="InterPro" id="IPR002999">
    <property type="entry name" value="Tudor"/>
</dbReference>
<dbReference type="InterPro" id="IPR047383">
    <property type="entry name" value="Tudor_TDRD8"/>
</dbReference>
<dbReference type="PANTHER" id="PTHR48008">
    <property type="entry name" value="LEUCINE-RICH REPEAT RECEPTOR-LIKE PROTEIN KINASE IMK3-RELATED"/>
    <property type="match status" value="1"/>
</dbReference>
<dbReference type="PANTHER" id="PTHR48008:SF6">
    <property type="entry name" value="LEUCINE-RICH REPEAT RECEPTOR-LIKE PROTEIN KINASE IMK3-RELATED"/>
    <property type="match status" value="1"/>
</dbReference>
<dbReference type="Pfam" id="PF00069">
    <property type="entry name" value="Pkinase"/>
    <property type="match status" value="1"/>
</dbReference>
<dbReference type="Pfam" id="PF00567">
    <property type="entry name" value="TUDOR"/>
    <property type="match status" value="1"/>
</dbReference>
<dbReference type="SMART" id="SM00220">
    <property type="entry name" value="S_TKc"/>
    <property type="match status" value="1"/>
</dbReference>
<dbReference type="SMART" id="SM00333">
    <property type="entry name" value="TUDOR"/>
    <property type="match status" value="1"/>
</dbReference>
<dbReference type="SUPFAM" id="SSF56112">
    <property type="entry name" value="Protein kinase-like (PK-like)"/>
    <property type="match status" value="1"/>
</dbReference>
<dbReference type="SUPFAM" id="SSF50199">
    <property type="entry name" value="Staphylococcal nuclease"/>
    <property type="match status" value="1"/>
</dbReference>
<dbReference type="SUPFAM" id="SSF63748">
    <property type="entry name" value="Tudor/PWWP/MBT"/>
    <property type="match status" value="1"/>
</dbReference>
<dbReference type="PROSITE" id="PS50011">
    <property type="entry name" value="PROTEIN_KINASE_DOM"/>
    <property type="match status" value="1"/>
</dbReference>
<dbReference type="PROSITE" id="PS50304">
    <property type="entry name" value="TUDOR"/>
    <property type="match status" value="1"/>
</dbReference>
<protein>
    <recommendedName>
        <fullName>Serine/threonine-protein kinase 31</fullName>
        <ecNumber>2.7.11.1</ecNumber>
    </recommendedName>
    <alternativeName>
        <fullName>Serine/threonine-protein kinase NYD-SPK</fullName>
    </alternativeName>
    <alternativeName>
        <fullName>Sugen kinase 396</fullName>
        <shortName>SgK396</shortName>
    </alternativeName>
</protein>
<proteinExistence type="evidence at protein level"/>
<gene>
    <name type="primary">STK31</name>
    <name type="synonym">SGK396</name>
</gene>
<sequence length="1019" mass="115694">MWVQGHSSRASATESVSFSGIVQMDEDTHYDKVEDVVGSHIEDAVTFWAQSINRNKDIMKIGCSLSEVCPQASSVLGNLDPNKIYGGLFSEDQCWYRCKVLKIISVEKCLVRYIDYGNTEILNRSDIVEIPLELQFSSVAKKYKLWGLHIPSDQEVTQFDQGTTFLGSLIFEKEIKMRIKATSEDGTVIAQAEYGSVDIGEEVLKKGFAEKCRLASRTDICEEKKLDPGQLVLRNLKSPIPLWGHRSNQSTFSRPKGHLSEKMTLDLKDENDAGNLITFPKESLAVGDFNLGSNVSLEKIKQDQKLIEENEKLKTEKDALLESYKALELKVEQIAQELQQEKAAAVDLTNHLEYTLKTYIDTRMKNLAAKMEILKEMRHVDISVRFGKDLSDAIQVLDEGCFTTPASLNGLEIIWAEYSLAQENIKTCEYVSEGNILIAQRNEMQQKLYMSVEDFILEVDESSLNKRLKTLQDLSVSLEAVYGQAKEGANSDEILKKFYDWKCDKREEFTSVRSETDASLHRLVAWFQRTLKVFDLSVEGSLISEDAMDNIDEILEKTESSVCKELEIALVDQGDADKEIISNTYSQVLQKIHSEERLIATVQAKYKDSIEFKKQLIEYLNKSPSVDHLLSIKKTLKSLKALLRWKLVEKSNLEESDDPDGSQIEKIKEEITQLRNNVFQEIYHEREEYEMLTSLAQKWFPELPLLHPEIGLLKYMNSGGLLTMSLERDLLDAEPMKELSSKRPLVRSEVNGQIILLKGYSVDVDTEAKVIERAATYHRAWREAEGDSGLLPLIFLFLCKSDPMAYLMVPYYPRANLNAVQANMPLNSEETLKVMKGVAQGLHTLHKADIIHGSLHQNNVFALNREQGIVGDFDFTKSVSQRASVNMMVGDLSLMSPELKMGKPASPGSDLYAYGCLLLWLSVQNQEFEINKDGIPKVDQFHLDDKVKSLLCSLICYRSSMTAEQVLNAECFLMPKEQSVPNPEKDTEYTLYKKEEEIKTENLDKCMEKTRNGEANFDC</sequence>
<keyword id="KW-0025">Alternative splicing</keyword>
<keyword id="KW-0067">ATP-binding</keyword>
<keyword id="KW-0175">Coiled coil</keyword>
<keyword id="KW-0418">Kinase</keyword>
<keyword id="KW-0547">Nucleotide-binding</keyword>
<keyword id="KW-1267">Proteomics identification</keyword>
<keyword id="KW-1185">Reference proteome</keyword>
<keyword id="KW-0723">Serine/threonine-protein kinase</keyword>
<keyword id="KW-0808">Transferase</keyword>